<protein>
    <recommendedName>
        <fullName evidence="1">Large ribosomal subunit protein bL9</fullName>
    </recommendedName>
    <alternativeName>
        <fullName evidence="3">50S ribosomal protein L9</fullName>
    </alternativeName>
</protein>
<organism>
    <name type="scientific">Exiguobacterium sibiricum (strain DSM 17290 / CCUG 55495 / CIP 109462 / JCM 13490 / 255-15)</name>
    <dbReference type="NCBI Taxonomy" id="262543"/>
    <lineage>
        <taxon>Bacteria</taxon>
        <taxon>Bacillati</taxon>
        <taxon>Bacillota</taxon>
        <taxon>Bacilli</taxon>
        <taxon>Bacillales</taxon>
        <taxon>Bacillales Family XII. Incertae Sedis</taxon>
        <taxon>Exiguobacterium</taxon>
    </lineage>
</organism>
<comment type="function">
    <text evidence="1">Binds to the 23S rRNA.</text>
</comment>
<comment type="similarity">
    <text evidence="1">Belongs to the bacterial ribosomal protein bL9 family.</text>
</comment>
<name>RL9_EXIS2</name>
<gene>
    <name evidence="1" type="primary">rplI</name>
    <name type="ordered locus">Exig_3034</name>
</gene>
<accession>B1YG95</accession>
<evidence type="ECO:0000255" key="1">
    <source>
        <dbReference type="HAMAP-Rule" id="MF_00503"/>
    </source>
</evidence>
<evidence type="ECO:0000256" key="2">
    <source>
        <dbReference type="SAM" id="MobiDB-lite"/>
    </source>
</evidence>
<evidence type="ECO:0000305" key="3"/>
<dbReference type="EMBL" id="CP001022">
    <property type="protein sequence ID" value="ACB62479.1"/>
    <property type="molecule type" value="Genomic_DNA"/>
</dbReference>
<dbReference type="RefSeq" id="WP_012371894.1">
    <property type="nucleotide sequence ID" value="NC_010556.1"/>
</dbReference>
<dbReference type="SMR" id="B1YG95"/>
<dbReference type="STRING" id="262543.Exig_3034"/>
<dbReference type="KEGG" id="esi:Exig_3034"/>
<dbReference type="eggNOG" id="COG0359">
    <property type="taxonomic scope" value="Bacteria"/>
</dbReference>
<dbReference type="HOGENOM" id="CLU_078938_3_0_9"/>
<dbReference type="OrthoDB" id="9788336at2"/>
<dbReference type="Proteomes" id="UP000001681">
    <property type="component" value="Chromosome"/>
</dbReference>
<dbReference type="GO" id="GO:1990904">
    <property type="term" value="C:ribonucleoprotein complex"/>
    <property type="evidence" value="ECO:0007669"/>
    <property type="project" value="UniProtKB-KW"/>
</dbReference>
<dbReference type="GO" id="GO:0005840">
    <property type="term" value="C:ribosome"/>
    <property type="evidence" value="ECO:0007669"/>
    <property type="project" value="UniProtKB-KW"/>
</dbReference>
<dbReference type="GO" id="GO:0019843">
    <property type="term" value="F:rRNA binding"/>
    <property type="evidence" value="ECO:0007669"/>
    <property type="project" value="UniProtKB-UniRule"/>
</dbReference>
<dbReference type="GO" id="GO:0003735">
    <property type="term" value="F:structural constituent of ribosome"/>
    <property type="evidence" value="ECO:0007669"/>
    <property type="project" value="InterPro"/>
</dbReference>
<dbReference type="GO" id="GO:0006412">
    <property type="term" value="P:translation"/>
    <property type="evidence" value="ECO:0007669"/>
    <property type="project" value="UniProtKB-UniRule"/>
</dbReference>
<dbReference type="FunFam" id="3.10.430.100:FF:000002">
    <property type="entry name" value="50S ribosomal protein L9"/>
    <property type="match status" value="1"/>
</dbReference>
<dbReference type="Gene3D" id="3.10.430.100">
    <property type="entry name" value="Ribosomal protein L9, C-terminal domain"/>
    <property type="match status" value="1"/>
</dbReference>
<dbReference type="Gene3D" id="3.40.5.10">
    <property type="entry name" value="Ribosomal protein L9, N-terminal domain"/>
    <property type="match status" value="1"/>
</dbReference>
<dbReference type="HAMAP" id="MF_00503">
    <property type="entry name" value="Ribosomal_bL9"/>
    <property type="match status" value="1"/>
</dbReference>
<dbReference type="InterPro" id="IPR000244">
    <property type="entry name" value="Ribosomal_bL9"/>
</dbReference>
<dbReference type="InterPro" id="IPR009027">
    <property type="entry name" value="Ribosomal_bL9/RNase_H1_N"/>
</dbReference>
<dbReference type="InterPro" id="IPR020594">
    <property type="entry name" value="Ribosomal_bL9_bac/chp"/>
</dbReference>
<dbReference type="InterPro" id="IPR020069">
    <property type="entry name" value="Ribosomal_bL9_C"/>
</dbReference>
<dbReference type="InterPro" id="IPR036791">
    <property type="entry name" value="Ribosomal_bL9_C_sf"/>
</dbReference>
<dbReference type="InterPro" id="IPR020070">
    <property type="entry name" value="Ribosomal_bL9_N"/>
</dbReference>
<dbReference type="InterPro" id="IPR036935">
    <property type="entry name" value="Ribosomal_bL9_N_sf"/>
</dbReference>
<dbReference type="NCBIfam" id="TIGR00158">
    <property type="entry name" value="L9"/>
    <property type="match status" value="1"/>
</dbReference>
<dbReference type="PANTHER" id="PTHR21368">
    <property type="entry name" value="50S RIBOSOMAL PROTEIN L9"/>
    <property type="match status" value="1"/>
</dbReference>
<dbReference type="Pfam" id="PF03948">
    <property type="entry name" value="Ribosomal_L9_C"/>
    <property type="match status" value="1"/>
</dbReference>
<dbReference type="Pfam" id="PF01281">
    <property type="entry name" value="Ribosomal_L9_N"/>
    <property type="match status" value="1"/>
</dbReference>
<dbReference type="SUPFAM" id="SSF55658">
    <property type="entry name" value="L9 N-domain-like"/>
    <property type="match status" value="1"/>
</dbReference>
<dbReference type="SUPFAM" id="SSF55653">
    <property type="entry name" value="Ribosomal protein L9 C-domain"/>
    <property type="match status" value="1"/>
</dbReference>
<sequence length="147" mass="16231">MKVIFLQDVKGQGKTGDVKDVADAYANNVLFKKKLARPATTGNLKQHEAHERKAAEEAKQALQDAQALKEKIEKETIIVSTKTGEGGRVFGSVTSKQIADELKQMGYKIDKRKIELEHPIKTLGVTKVPLKLHNEVTATLNVQVKEA</sequence>
<proteinExistence type="inferred from homology"/>
<keyword id="KW-1185">Reference proteome</keyword>
<keyword id="KW-0687">Ribonucleoprotein</keyword>
<keyword id="KW-0689">Ribosomal protein</keyword>
<keyword id="KW-0694">RNA-binding</keyword>
<keyword id="KW-0699">rRNA-binding</keyword>
<reference key="1">
    <citation type="submission" date="2008-04" db="EMBL/GenBank/DDBJ databases">
        <title>Complete sequence of chromosome of Exiguobacterium sibiricum 255-15.</title>
        <authorList>
            <consortium name="US DOE Joint Genome Institute"/>
            <person name="Copeland A."/>
            <person name="Lucas S."/>
            <person name="Lapidus A."/>
            <person name="Glavina del Rio T."/>
            <person name="Dalin E."/>
            <person name="Tice H."/>
            <person name="Bruce D."/>
            <person name="Goodwin L."/>
            <person name="Pitluck S."/>
            <person name="Kiss H."/>
            <person name="Chertkov O."/>
            <person name="Monk C."/>
            <person name="Brettin T."/>
            <person name="Detter J.C."/>
            <person name="Han C."/>
            <person name="Kuske C.R."/>
            <person name="Schmutz J."/>
            <person name="Larimer F."/>
            <person name="Land M."/>
            <person name="Hauser L."/>
            <person name="Kyrpides N."/>
            <person name="Mikhailova N."/>
            <person name="Vishnivetskaya T."/>
            <person name="Rodrigues D.F."/>
            <person name="Gilichinsky D."/>
            <person name="Tiedje J."/>
            <person name="Richardson P."/>
        </authorList>
    </citation>
    <scope>NUCLEOTIDE SEQUENCE [LARGE SCALE GENOMIC DNA]</scope>
    <source>
        <strain>DSM 17290 / CCUG 55495 / CIP 109462 / JCM 13490 / 255-15</strain>
    </source>
</reference>
<feature type="chain" id="PRO_1000126915" description="Large ribosomal subunit protein bL9">
    <location>
        <begin position="1"/>
        <end position="147"/>
    </location>
</feature>
<feature type="region of interest" description="Disordered" evidence="2">
    <location>
        <begin position="40"/>
        <end position="60"/>
    </location>
</feature>
<feature type="compositionally biased region" description="Basic and acidic residues" evidence="2">
    <location>
        <begin position="45"/>
        <end position="59"/>
    </location>
</feature>